<keyword id="KW-0539">Nucleus</keyword>
<keyword id="KW-1185">Reference proteome</keyword>
<keyword id="KW-0677">Repeat</keyword>
<keyword id="KW-0687">Ribonucleoprotein</keyword>
<keyword id="KW-0690">Ribosome biogenesis</keyword>
<keyword id="KW-0694">RNA-binding</keyword>
<keyword id="KW-0698">rRNA processing</keyword>
<dbReference type="EMBL" id="AJ006826">
    <property type="protein sequence ID" value="CAA07263.1"/>
    <property type="status" value="ALT_INIT"/>
    <property type="molecule type" value="Genomic_DNA"/>
</dbReference>
<dbReference type="EMBL" id="AL391737">
    <property type="protein sequence ID" value="CAD25009.2"/>
    <property type="molecule type" value="Genomic_DNA"/>
</dbReference>
<dbReference type="RefSeq" id="XP_965974.1">
    <property type="nucleotide sequence ID" value="XM_960881.1"/>
</dbReference>
<dbReference type="SMR" id="O96722"/>
<dbReference type="FunCoup" id="O96722">
    <property type="interactions" value="157"/>
</dbReference>
<dbReference type="STRING" id="284813.O96722"/>
<dbReference type="VEuPathDB" id="MicrosporidiaDB:ECU01_1360"/>
<dbReference type="HOGENOM" id="CLU_122030_0_0_1"/>
<dbReference type="InParanoid" id="O96722"/>
<dbReference type="OrthoDB" id="2187159at2759"/>
<dbReference type="Proteomes" id="UP000000819">
    <property type="component" value="Chromosome I"/>
</dbReference>
<dbReference type="GO" id="GO:0005730">
    <property type="term" value="C:nucleolus"/>
    <property type="evidence" value="ECO:0007669"/>
    <property type="project" value="UniProtKB-SubCell"/>
</dbReference>
<dbReference type="GO" id="GO:1990904">
    <property type="term" value="C:ribonucleoprotein complex"/>
    <property type="evidence" value="ECO:0007669"/>
    <property type="project" value="UniProtKB-KW"/>
</dbReference>
<dbReference type="GO" id="GO:0003723">
    <property type="term" value="F:RNA binding"/>
    <property type="evidence" value="ECO:0007669"/>
    <property type="project" value="UniProtKB-KW"/>
</dbReference>
<dbReference type="GO" id="GO:0001522">
    <property type="term" value="P:pseudouridine synthesis"/>
    <property type="evidence" value="ECO:0007669"/>
    <property type="project" value="InterPro"/>
</dbReference>
<dbReference type="GO" id="GO:0006364">
    <property type="term" value="P:rRNA processing"/>
    <property type="evidence" value="ECO:0007669"/>
    <property type="project" value="UniProtKB-KW"/>
</dbReference>
<dbReference type="Gene3D" id="2.40.10.230">
    <property type="entry name" value="Probable tRNA pseudouridine synthase domain"/>
    <property type="match status" value="1"/>
</dbReference>
<dbReference type="InterPro" id="IPR038664">
    <property type="entry name" value="Gar1/Naf1_Cbf5-bd_sf"/>
</dbReference>
<dbReference type="InterPro" id="IPR007504">
    <property type="entry name" value="H/ACA_rnp_Gar1/Naf1"/>
</dbReference>
<dbReference type="InterPro" id="IPR009000">
    <property type="entry name" value="Transl_B-barrel_sf"/>
</dbReference>
<dbReference type="Pfam" id="PF04410">
    <property type="entry name" value="Gar1"/>
    <property type="match status" value="1"/>
</dbReference>
<dbReference type="SUPFAM" id="SSF50447">
    <property type="entry name" value="Translation proteins"/>
    <property type="match status" value="1"/>
</dbReference>
<comment type="function">
    <text evidence="1">Non-catalytic component of the H/ACA small nucleolar ribonucleoprotein (H/ACA snoRNP), which catalyzes pseudouridylation of rRNA and is required for ribosome biogenesis. This involves the isomerization of uridine such that the ribose is subsequently attached to C5, instead of the normal N1. Pseudouridine ('psi') residues may serve to stabilize the conformation of rRNAs. The H/ACA snoRNP complex also mediates pseudouridylation of other types of RNAs. The H/ACA snoRNP complex mediates pseudouridylation at position 93 in U2 snRNA.</text>
</comment>
<comment type="subunit">
    <text evidence="1">Component of the small nucleolar ribonucleoprotein particles containing H/ACA-type snoRNAs (H/ACA snoRNPs).</text>
</comment>
<comment type="subcellular location">
    <subcellularLocation>
        <location evidence="1">Nucleus</location>
        <location evidence="1">Nucleolus</location>
    </subcellularLocation>
</comment>
<comment type="similarity">
    <text evidence="3">Belongs to the GAR1 family.</text>
</comment>
<comment type="sequence caution" evidence="3">
    <conflict type="erroneous initiation">
        <sequence resource="EMBL-CDS" id="CAA07263"/>
    </conflict>
    <text>Extended N-terminus.</text>
</comment>
<feature type="chain" id="PRO_0000208564" description="H/ACA ribonucleoprotein complex subunit GAR1">
    <location>
        <begin position="1"/>
        <end position="182"/>
    </location>
</feature>
<feature type="region of interest" description="Disordered" evidence="2">
    <location>
        <begin position="98"/>
        <end position="182"/>
    </location>
</feature>
<feature type="compositionally biased region" description="Basic and acidic residues" evidence="2">
    <location>
        <begin position="100"/>
        <end position="124"/>
    </location>
</feature>
<feature type="compositionally biased region" description="Basic and acidic residues" evidence="2">
    <location>
        <begin position="138"/>
        <end position="148"/>
    </location>
</feature>
<feature type="compositionally biased region" description="Basic and acidic residues" evidence="2">
    <location>
        <begin position="160"/>
        <end position="182"/>
    </location>
</feature>
<proteinExistence type="inferred from homology"/>
<protein>
    <recommendedName>
        <fullName>H/ACA ribonucleoprotein complex subunit GAR1</fullName>
    </recommendedName>
    <alternativeName>
        <fullName>snoRNP protein GAR1</fullName>
    </alternativeName>
</protein>
<organism>
    <name type="scientific">Encephalitozoon cuniculi (strain GB-M1)</name>
    <name type="common">Microsporidian parasite</name>
    <dbReference type="NCBI Taxonomy" id="284813"/>
    <lineage>
        <taxon>Eukaryota</taxon>
        <taxon>Fungi</taxon>
        <taxon>Fungi incertae sedis</taxon>
        <taxon>Microsporidia</taxon>
        <taxon>Unikaryonidae</taxon>
        <taxon>Encephalitozoon</taxon>
    </lineage>
</organism>
<sequence>MARNFNNRKRLKSTETAELGKILYMCQGQLVIKLAAKDIPYPNSPVLDASSKIIGKVDEILGRIDDVHVTIKPDDQCSISKEGETLFSYADKFIPKKRFLPREETEKKKEEMDRIKPKPKKDQASKGNRPRAFGGKQRGSDRKPDRKWGVIQSNWSKGGRKAESRKDHGSKRPDANRVKPRN</sequence>
<name>GAR1_ENCCU</name>
<accession>O96722</accession>
<gene>
    <name type="primary">GAR1</name>
    <name type="ordered locus">ECU01_1360</name>
</gene>
<evidence type="ECO:0000250" key="1">
    <source>
        <dbReference type="UniProtKB" id="P28007"/>
    </source>
</evidence>
<evidence type="ECO:0000256" key="2">
    <source>
        <dbReference type="SAM" id="MobiDB-lite"/>
    </source>
</evidence>
<evidence type="ECO:0000305" key="3"/>
<reference key="1">
    <citation type="submission" date="1998-06" db="EMBL/GenBank/DDBJ databases">
        <title>Putative snoRNP from the chromosome I of Encephalitozoon cuniculi (Microspora).</title>
        <authorList>
            <person name="Duffieux F."/>
            <person name="Peyret P."/>
            <person name="Roe B.A."/>
            <person name="Vivares C.P."/>
        </authorList>
    </citation>
    <scope>NUCLEOTIDE SEQUENCE [GENOMIC DNA]</scope>
    <source>
        <strain>GB-M1</strain>
    </source>
</reference>
<reference key="2">
    <citation type="journal article" date="2001" name="Genome Res.">
        <title>Sequence and analysis of chromosome I of the amitochondriate intracellular parasite Encephalitozoon cuniculi (Microspora).</title>
        <authorList>
            <person name="Peyret P."/>
            <person name="Katinka M.D."/>
            <person name="Duprat S."/>
            <person name="Duffieux F."/>
            <person name="Barbe V."/>
            <person name="Barbazanges M."/>
            <person name="Weissenbach J."/>
            <person name="Saurin W."/>
            <person name="Vivares C.P."/>
        </authorList>
    </citation>
    <scope>NUCLEOTIDE SEQUENCE [LARGE SCALE GENOMIC DNA]</scope>
    <source>
        <strain>GB-M1</strain>
    </source>
</reference>
<reference key="3">
    <citation type="journal article" date="2001" name="Nature">
        <title>Genome sequence and gene compaction of the eukaryote parasite Encephalitozoon cuniculi.</title>
        <authorList>
            <person name="Katinka M.D."/>
            <person name="Duprat S."/>
            <person name="Cornillot E."/>
            <person name="Metenier G."/>
            <person name="Thomarat F."/>
            <person name="Prensier G."/>
            <person name="Barbe V."/>
            <person name="Peyretaillade E."/>
            <person name="Brottier P."/>
            <person name="Wincker P."/>
            <person name="Delbac F."/>
            <person name="El Alaoui H."/>
            <person name="Peyret P."/>
            <person name="Saurin W."/>
            <person name="Gouy M."/>
            <person name="Weissenbach J."/>
            <person name="Vivares C.P."/>
        </authorList>
    </citation>
    <scope>NUCLEOTIDE SEQUENCE [LARGE SCALE GENOMIC DNA]</scope>
    <source>
        <strain>GB-M1</strain>
    </source>
</reference>
<reference key="4">
    <citation type="journal article" date="2009" name="BMC Genomics">
        <title>Identification of transcriptional signals in Encephalitozoon cuniculi widespread among Microsporidia phylum: support for accurate structural genome annotation.</title>
        <authorList>
            <person name="Peyretaillade E."/>
            <person name="Goncalves O."/>
            <person name="Terrat S."/>
            <person name="Dugat-Bony E."/>
            <person name="Wincker P."/>
            <person name="Cornman R.S."/>
            <person name="Evans J.D."/>
            <person name="Delbac F."/>
            <person name="Peyret P."/>
        </authorList>
    </citation>
    <scope>GENOME REANNOTATION</scope>
    <source>
        <strain>GB-M1</strain>
    </source>
</reference>